<accession>Q2LR03</accession>
<feature type="chain" id="PRO_1000034317" description="Transcription elongation factor GreA">
    <location>
        <begin position="1"/>
        <end position="161"/>
    </location>
</feature>
<feature type="coiled-coil region" evidence="1">
    <location>
        <begin position="46"/>
        <end position="71"/>
    </location>
</feature>
<evidence type="ECO:0000255" key="1">
    <source>
        <dbReference type="HAMAP-Rule" id="MF_00105"/>
    </source>
</evidence>
<comment type="function">
    <text evidence="1">Necessary for efficient RNA polymerase transcription elongation past template-encoded arresting sites. The arresting sites in DNA have the property of trapping a certain fraction of elongating RNA polymerases that pass through, resulting in locked ternary complexes. Cleavage of the nascent transcript by cleavage factors such as GreA or GreB allows the resumption of elongation from the new 3'terminus. GreA releases sequences of 2 to 3 nucleotides.</text>
</comment>
<comment type="similarity">
    <text evidence="1">Belongs to the GreA/GreB family.</text>
</comment>
<keyword id="KW-0175">Coiled coil</keyword>
<keyword id="KW-0238">DNA-binding</keyword>
<keyword id="KW-1185">Reference proteome</keyword>
<keyword id="KW-0804">Transcription</keyword>
<keyword id="KW-0805">Transcription regulation</keyword>
<organism>
    <name type="scientific">Syntrophus aciditrophicus (strain SB)</name>
    <dbReference type="NCBI Taxonomy" id="56780"/>
    <lineage>
        <taxon>Bacteria</taxon>
        <taxon>Pseudomonadati</taxon>
        <taxon>Thermodesulfobacteriota</taxon>
        <taxon>Syntrophia</taxon>
        <taxon>Syntrophales</taxon>
        <taxon>Syntrophaceae</taxon>
        <taxon>Syntrophus</taxon>
    </lineage>
</organism>
<dbReference type="EMBL" id="CP000252">
    <property type="protein sequence ID" value="ABC76513.1"/>
    <property type="molecule type" value="Genomic_DNA"/>
</dbReference>
<dbReference type="RefSeq" id="WP_011416547.1">
    <property type="nucleotide sequence ID" value="NC_007759.1"/>
</dbReference>
<dbReference type="SMR" id="Q2LR03"/>
<dbReference type="FunCoup" id="Q2LR03">
    <property type="interactions" value="453"/>
</dbReference>
<dbReference type="STRING" id="56780.SYN_00542"/>
<dbReference type="KEGG" id="sat:SYN_00542"/>
<dbReference type="eggNOG" id="COG0782">
    <property type="taxonomic scope" value="Bacteria"/>
</dbReference>
<dbReference type="HOGENOM" id="CLU_101379_2_0_7"/>
<dbReference type="InParanoid" id="Q2LR03"/>
<dbReference type="OrthoDB" id="9808774at2"/>
<dbReference type="Proteomes" id="UP000001933">
    <property type="component" value="Chromosome"/>
</dbReference>
<dbReference type="GO" id="GO:0003677">
    <property type="term" value="F:DNA binding"/>
    <property type="evidence" value="ECO:0007669"/>
    <property type="project" value="UniProtKB-UniRule"/>
</dbReference>
<dbReference type="GO" id="GO:0070063">
    <property type="term" value="F:RNA polymerase binding"/>
    <property type="evidence" value="ECO:0007669"/>
    <property type="project" value="InterPro"/>
</dbReference>
<dbReference type="GO" id="GO:0006354">
    <property type="term" value="P:DNA-templated transcription elongation"/>
    <property type="evidence" value="ECO:0007669"/>
    <property type="project" value="TreeGrafter"/>
</dbReference>
<dbReference type="GO" id="GO:0032784">
    <property type="term" value="P:regulation of DNA-templated transcription elongation"/>
    <property type="evidence" value="ECO:0007669"/>
    <property type="project" value="UniProtKB-UniRule"/>
</dbReference>
<dbReference type="FunFam" id="1.10.287.180:FF:000001">
    <property type="entry name" value="Transcription elongation factor GreA"/>
    <property type="match status" value="1"/>
</dbReference>
<dbReference type="FunFam" id="3.10.50.30:FF:000001">
    <property type="entry name" value="Transcription elongation factor GreA"/>
    <property type="match status" value="1"/>
</dbReference>
<dbReference type="Gene3D" id="3.10.50.30">
    <property type="entry name" value="Transcription elongation factor, GreA/GreB, C-terminal domain"/>
    <property type="match status" value="1"/>
</dbReference>
<dbReference type="Gene3D" id="1.10.287.180">
    <property type="entry name" value="Transcription elongation factor, GreA/GreB, N-terminal domain"/>
    <property type="match status" value="1"/>
</dbReference>
<dbReference type="HAMAP" id="MF_00105">
    <property type="entry name" value="GreA_GreB"/>
    <property type="match status" value="1"/>
</dbReference>
<dbReference type="InterPro" id="IPR036953">
    <property type="entry name" value="GreA/GreB_C_sf"/>
</dbReference>
<dbReference type="InterPro" id="IPR018151">
    <property type="entry name" value="TF_GreA/GreB_CS"/>
</dbReference>
<dbReference type="InterPro" id="IPR006359">
    <property type="entry name" value="Tscrpt_elong_fac_GreA"/>
</dbReference>
<dbReference type="InterPro" id="IPR028624">
    <property type="entry name" value="Tscrpt_elong_fac_GreA/B"/>
</dbReference>
<dbReference type="InterPro" id="IPR001437">
    <property type="entry name" value="Tscrpt_elong_fac_GreA/B_C"/>
</dbReference>
<dbReference type="InterPro" id="IPR023459">
    <property type="entry name" value="Tscrpt_elong_fac_GreA/B_fam"/>
</dbReference>
<dbReference type="InterPro" id="IPR022691">
    <property type="entry name" value="Tscrpt_elong_fac_GreA/B_N"/>
</dbReference>
<dbReference type="InterPro" id="IPR036805">
    <property type="entry name" value="Tscrpt_elong_fac_GreA/B_N_sf"/>
</dbReference>
<dbReference type="NCBIfam" id="TIGR01462">
    <property type="entry name" value="greA"/>
    <property type="match status" value="1"/>
</dbReference>
<dbReference type="NCBIfam" id="NF001261">
    <property type="entry name" value="PRK00226.1-2"/>
    <property type="match status" value="1"/>
</dbReference>
<dbReference type="NCBIfam" id="NF001263">
    <property type="entry name" value="PRK00226.1-4"/>
    <property type="match status" value="1"/>
</dbReference>
<dbReference type="NCBIfam" id="NF001264">
    <property type="entry name" value="PRK00226.1-5"/>
    <property type="match status" value="1"/>
</dbReference>
<dbReference type="PANTHER" id="PTHR30437">
    <property type="entry name" value="TRANSCRIPTION ELONGATION FACTOR GREA"/>
    <property type="match status" value="1"/>
</dbReference>
<dbReference type="PANTHER" id="PTHR30437:SF4">
    <property type="entry name" value="TRANSCRIPTION ELONGATION FACTOR GREA"/>
    <property type="match status" value="1"/>
</dbReference>
<dbReference type="Pfam" id="PF01272">
    <property type="entry name" value="GreA_GreB"/>
    <property type="match status" value="1"/>
</dbReference>
<dbReference type="Pfam" id="PF03449">
    <property type="entry name" value="GreA_GreB_N"/>
    <property type="match status" value="1"/>
</dbReference>
<dbReference type="PIRSF" id="PIRSF006092">
    <property type="entry name" value="GreA_GreB"/>
    <property type="match status" value="1"/>
</dbReference>
<dbReference type="SUPFAM" id="SSF54534">
    <property type="entry name" value="FKBP-like"/>
    <property type="match status" value="1"/>
</dbReference>
<dbReference type="SUPFAM" id="SSF46557">
    <property type="entry name" value="GreA transcript cleavage protein, N-terminal domain"/>
    <property type="match status" value="1"/>
</dbReference>
<dbReference type="PROSITE" id="PS00829">
    <property type="entry name" value="GREAB_1"/>
    <property type="match status" value="1"/>
</dbReference>
<dbReference type="PROSITE" id="PS00830">
    <property type="entry name" value="GREAB_2"/>
    <property type="match status" value="1"/>
</dbReference>
<sequence length="161" mass="17734">MEKMPITKSGFENLKKELEHLKCVLIPANIKDIEIARAHGDLSENAEYTAAKEKQSFLHGKLQELENNLALSNVIDLKMLSDDRIVFGATVIIEEASTGKQTNYQLVGPFESNISENKISVTSPIGKALIGKSIGDEVKVHTPGGIRNFEVVDIYINPSEL</sequence>
<gene>
    <name evidence="1" type="primary">greA</name>
    <name type="ordered locus">SYNAS_06340</name>
    <name type="ORF">SYN_00542</name>
</gene>
<name>GREA_SYNAS</name>
<reference key="1">
    <citation type="journal article" date="2007" name="Proc. Natl. Acad. Sci. U.S.A.">
        <title>The genome of Syntrophus aciditrophicus: life at the thermodynamic limit of microbial growth.</title>
        <authorList>
            <person name="McInerney M.J."/>
            <person name="Rohlin L."/>
            <person name="Mouttaki H."/>
            <person name="Kim U."/>
            <person name="Krupp R.S."/>
            <person name="Rios-Hernandez L."/>
            <person name="Sieber J."/>
            <person name="Struchtemeyer C.G."/>
            <person name="Bhattacharyya A."/>
            <person name="Campbell J.W."/>
            <person name="Gunsalus R.P."/>
        </authorList>
    </citation>
    <scope>NUCLEOTIDE SEQUENCE [LARGE SCALE GENOMIC DNA]</scope>
    <source>
        <strain>SB</strain>
    </source>
</reference>
<proteinExistence type="inferred from homology"/>
<protein>
    <recommendedName>
        <fullName evidence="1">Transcription elongation factor GreA</fullName>
    </recommendedName>
    <alternativeName>
        <fullName evidence="1">Transcript cleavage factor GreA</fullName>
    </alternativeName>
</protein>